<organism>
    <name type="scientific">Synechococcus sp. (strain CC9311)</name>
    <dbReference type="NCBI Taxonomy" id="64471"/>
    <lineage>
        <taxon>Bacteria</taxon>
        <taxon>Bacillati</taxon>
        <taxon>Cyanobacteriota</taxon>
        <taxon>Cyanophyceae</taxon>
        <taxon>Synechococcales</taxon>
        <taxon>Synechococcaceae</taxon>
        <taxon>Synechococcus</taxon>
    </lineage>
</organism>
<accession>Q0IDV2</accession>
<name>PSAC_SYNS3</name>
<evidence type="ECO:0000250" key="1"/>
<evidence type="ECO:0000255" key="2">
    <source>
        <dbReference type="HAMAP-Rule" id="MF_01303"/>
    </source>
</evidence>
<proteinExistence type="inferred from homology"/>
<dbReference type="EC" id="1.97.1.12" evidence="2"/>
<dbReference type="EMBL" id="CP000435">
    <property type="protein sequence ID" value="ABI47876.1"/>
    <property type="molecule type" value="Genomic_DNA"/>
</dbReference>
<dbReference type="RefSeq" id="WP_006042515.1">
    <property type="nucleotide sequence ID" value="NC_008319.1"/>
</dbReference>
<dbReference type="SMR" id="Q0IDV2"/>
<dbReference type="STRING" id="64471.sync_0133"/>
<dbReference type="KEGG" id="syg:sync_0133"/>
<dbReference type="eggNOG" id="COG1143">
    <property type="taxonomic scope" value="Bacteria"/>
</dbReference>
<dbReference type="HOGENOM" id="CLU_139698_8_0_3"/>
<dbReference type="OrthoDB" id="9804603at2"/>
<dbReference type="Proteomes" id="UP000001961">
    <property type="component" value="Chromosome"/>
</dbReference>
<dbReference type="GO" id="GO:0009522">
    <property type="term" value="C:photosystem I"/>
    <property type="evidence" value="ECO:0007669"/>
    <property type="project" value="UniProtKB-KW"/>
</dbReference>
<dbReference type="GO" id="GO:0031676">
    <property type="term" value="C:plasma membrane-derived thylakoid membrane"/>
    <property type="evidence" value="ECO:0007669"/>
    <property type="project" value="UniProtKB-SubCell"/>
</dbReference>
<dbReference type="GO" id="GO:0051539">
    <property type="term" value="F:4 iron, 4 sulfur cluster binding"/>
    <property type="evidence" value="ECO:0007669"/>
    <property type="project" value="UniProtKB-KW"/>
</dbReference>
<dbReference type="GO" id="GO:0009055">
    <property type="term" value="F:electron transfer activity"/>
    <property type="evidence" value="ECO:0007669"/>
    <property type="project" value="UniProtKB-UniRule"/>
</dbReference>
<dbReference type="GO" id="GO:0046872">
    <property type="term" value="F:metal ion binding"/>
    <property type="evidence" value="ECO:0007669"/>
    <property type="project" value="UniProtKB-KW"/>
</dbReference>
<dbReference type="GO" id="GO:0016491">
    <property type="term" value="F:oxidoreductase activity"/>
    <property type="evidence" value="ECO:0007669"/>
    <property type="project" value="UniProtKB-KW"/>
</dbReference>
<dbReference type="GO" id="GO:0009773">
    <property type="term" value="P:photosynthetic electron transport in photosystem I"/>
    <property type="evidence" value="ECO:0007669"/>
    <property type="project" value="InterPro"/>
</dbReference>
<dbReference type="FunFam" id="3.30.70.20:FF:000001">
    <property type="entry name" value="Photosystem I iron-sulfur center"/>
    <property type="match status" value="1"/>
</dbReference>
<dbReference type="Gene3D" id="3.30.70.20">
    <property type="match status" value="1"/>
</dbReference>
<dbReference type="HAMAP" id="MF_01303">
    <property type="entry name" value="PSI_PsaC"/>
    <property type="match status" value="1"/>
</dbReference>
<dbReference type="InterPro" id="IPR017896">
    <property type="entry name" value="4Fe4S_Fe-S-bd"/>
</dbReference>
<dbReference type="InterPro" id="IPR017900">
    <property type="entry name" value="4Fe4S_Fe_S_CS"/>
</dbReference>
<dbReference type="InterPro" id="IPR050157">
    <property type="entry name" value="PSI_iron-sulfur_center"/>
</dbReference>
<dbReference type="InterPro" id="IPR017491">
    <property type="entry name" value="PSI_PsaC"/>
</dbReference>
<dbReference type="NCBIfam" id="TIGR03048">
    <property type="entry name" value="PS_I_psaC"/>
    <property type="match status" value="1"/>
</dbReference>
<dbReference type="PANTHER" id="PTHR24960:SF79">
    <property type="entry name" value="PHOTOSYSTEM I IRON-SULFUR CENTER"/>
    <property type="match status" value="1"/>
</dbReference>
<dbReference type="PANTHER" id="PTHR24960">
    <property type="entry name" value="PHOTOSYSTEM I IRON-SULFUR CENTER-RELATED"/>
    <property type="match status" value="1"/>
</dbReference>
<dbReference type="Pfam" id="PF12838">
    <property type="entry name" value="Fer4_7"/>
    <property type="match status" value="1"/>
</dbReference>
<dbReference type="SUPFAM" id="SSF54862">
    <property type="entry name" value="4Fe-4S ferredoxins"/>
    <property type="match status" value="1"/>
</dbReference>
<dbReference type="PROSITE" id="PS00198">
    <property type="entry name" value="4FE4S_FER_1"/>
    <property type="match status" value="2"/>
</dbReference>
<dbReference type="PROSITE" id="PS51379">
    <property type="entry name" value="4FE4S_FER_2"/>
    <property type="match status" value="2"/>
</dbReference>
<sequence length="81" mass="8844">MSHAVKIYDTCIGCTQCVRACPLDVLEMVPWDGCKAGQIASSPRTEDCVGCKRCETACPTDFLSIRVYLGDETSRSMGLSY</sequence>
<reference key="1">
    <citation type="journal article" date="2006" name="Proc. Natl. Acad. Sci. U.S.A.">
        <title>Genome sequence of Synechococcus CC9311: insights into adaptation to a coastal environment.</title>
        <authorList>
            <person name="Palenik B."/>
            <person name="Ren Q."/>
            <person name="Dupont C.L."/>
            <person name="Myers G.S."/>
            <person name="Heidelberg J.F."/>
            <person name="Badger J.H."/>
            <person name="Madupu R."/>
            <person name="Nelson W.C."/>
            <person name="Brinkac L.M."/>
            <person name="Dodson R.J."/>
            <person name="Durkin A.S."/>
            <person name="Daugherty S.C."/>
            <person name="Sullivan S.A."/>
            <person name="Khouri H."/>
            <person name="Mohamoud Y."/>
            <person name="Halpin R."/>
            <person name="Paulsen I.T."/>
        </authorList>
    </citation>
    <scope>NUCLEOTIDE SEQUENCE [LARGE SCALE GENOMIC DNA]</scope>
    <source>
        <strain>CC9311</strain>
    </source>
</reference>
<feature type="initiator methionine" description="Removed" evidence="1">
    <location>
        <position position="1"/>
    </location>
</feature>
<feature type="chain" id="PRO_0000292104" description="Photosystem I iron-sulfur center">
    <location>
        <begin position="2"/>
        <end position="81"/>
    </location>
</feature>
<feature type="domain" description="4Fe-4S ferredoxin-type 1" evidence="2">
    <location>
        <begin position="2"/>
        <end position="31"/>
    </location>
</feature>
<feature type="domain" description="4Fe-4S ferredoxin-type 2" evidence="2">
    <location>
        <begin position="37"/>
        <end position="68"/>
    </location>
</feature>
<feature type="binding site" evidence="2">
    <location>
        <position position="11"/>
    </location>
    <ligand>
        <name>[4Fe-4S] cluster</name>
        <dbReference type="ChEBI" id="CHEBI:49883"/>
        <label>1</label>
    </ligand>
</feature>
<feature type="binding site" evidence="2">
    <location>
        <position position="14"/>
    </location>
    <ligand>
        <name>[4Fe-4S] cluster</name>
        <dbReference type="ChEBI" id="CHEBI:49883"/>
        <label>1</label>
    </ligand>
</feature>
<feature type="binding site" evidence="2">
    <location>
        <position position="17"/>
    </location>
    <ligand>
        <name>[4Fe-4S] cluster</name>
        <dbReference type="ChEBI" id="CHEBI:49883"/>
        <label>1</label>
    </ligand>
</feature>
<feature type="binding site" evidence="2">
    <location>
        <position position="21"/>
    </location>
    <ligand>
        <name>[4Fe-4S] cluster</name>
        <dbReference type="ChEBI" id="CHEBI:49883"/>
        <label>2</label>
    </ligand>
</feature>
<feature type="binding site" evidence="2">
    <location>
        <position position="48"/>
    </location>
    <ligand>
        <name>[4Fe-4S] cluster</name>
        <dbReference type="ChEBI" id="CHEBI:49883"/>
        <label>2</label>
    </ligand>
</feature>
<feature type="binding site" evidence="2">
    <location>
        <position position="51"/>
    </location>
    <ligand>
        <name>[4Fe-4S] cluster</name>
        <dbReference type="ChEBI" id="CHEBI:49883"/>
        <label>2</label>
    </ligand>
</feature>
<feature type="binding site" evidence="2">
    <location>
        <position position="54"/>
    </location>
    <ligand>
        <name>[4Fe-4S] cluster</name>
        <dbReference type="ChEBI" id="CHEBI:49883"/>
        <label>2</label>
    </ligand>
</feature>
<feature type="binding site" evidence="2">
    <location>
        <position position="58"/>
    </location>
    <ligand>
        <name>[4Fe-4S] cluster</name>
        <dbReference type="ChEBI" id="CHEBI:49883"/>
        <label>1</label>
    </ligand>
</feature>
<gene>
    <name evidence="2" type="primary">psaC</name>
    <name type="ordered locus">sync_0133</name>
</gene>
<protein>
    <recommendedName>
        <fullName evidence="2">Photosystem I iron-sulfur center</fullName>
        <ecNumber evidence="2">1.97.1.12</ecNumber>
    </recommendedName>
    <alternativeName>
        <fullName evidence="2">9 kDa polypeptide</fullName>
    </alternativeName>
    <alternativeName>
        <fullName evidence="2">PSI-C</fullName>
    </alternativeName>
    <alternativeName>
        <fullName evidence="2">Photosystem I subunit VII</fullName>
    </alternativeName>
    <alternativeName>
        <fullName evidence="2">PsaC</fullName>
    </alternativeName>
</protein>
<keyword id="KW-0004">4Fe-4S</keyword>
<keyword id="KW-0249">Electron transport</keyword>
<keyword id="KW-0408">Iron</keyword>
<keyword id="KW-0411">Iron-sulfur</keyword>
<keyword id="KW-0472">Membrane</keyword>
<keyword id="KW-0479">Metal-binding</keyword>
<keyword id="KW-0560">Oxidoreductase</keyword>
<keyword id="KW-0602">Photosynthesis</keyword>
<keyword id="KW-0603">Photosystem I</keyword>
<keyword id="KW-1185">Reference proteome</keyword>
<keyword id="KW-0677">Repeat</keyword>
<keyword id="KW-0793">Thylakoid</keyword>
<keyword id="KW-0813">Transport</keyword>
<comment type="function">
    <text evidence="2">Apoprotein for the two 4Fe-4S centers FA and FB of photosystem I (PSI); essential for photochemical activity. FB is the terminal electron acceptor of PSI, donating electrons to ferredoxin. The C-terminus interacts with PsaA/B/D and helps assemble the protein into the PSI complex. Required for binding of PsaD and PsaE to PSI. PSI is a plastocyanin/cytochrome c6-ferredoxin oxidoreductase, converting photonic excitation into a charge separation, which transfers an electron from the donor P700 chlorophyll pair to the spectroscopically characterized acceptors A0, A1, FX, FA and FB in turn.</text>
</comment>
<comment type="catalytic activity">
    <reaction evidence="2">
        <text>reduced [plastocyanin] + hnu + oxidized [2Fe-2S]-[ferredoxin] = oxidized [plastocyanin] + reduced [2Fe-2S]-[ferredoxin]</text>
        <dbReference type="Rhea" id="RHEA:30407"/>
        <dbReference type="Rhea" id="RHEA-COMP:10000"/>
        <dbReference type="Rhea" id="RHEA-COMP:10001"/>
        <dbReference type="Rhea" id="RHEA-COMP:10039"/>
        <dbReference type="Rhea" id="RHEA-COMP:10040"/>
        <dbReference type="ChEBI" id="CHEBI:29036"/>
        <dbReference type="ChEBI" id="CHEBI:30212"/>
        <dbReference type="ChEBI" id="CHEBI:33737"/>
        <dbReference type="ChEBI" id="CHEBI:33738"/>
        <dbReference type="ChEBI" id="CHEBI:49552"/>
        <dbReference type="EC" id="1.97.1.12"/>
    </reaction>
</comment>
<comment type="cofactor">
    <cofactor evidence="2">
        <name>[4Fe-4S] cluster</name>
        <dbReference type="ChEBI" id="CHEBI:49883"/>
    </cofactor>
    <text evidence="2">Binds 2 [4Fe-4S] clusters. Cluster 2 is most probably the spectroscopically characterized electron acceptor FA and cluster 1 is most probably FB.</text>
</comment>
<comment type="subunit">
    <text evidence="2">The cyanobacterial PSI reaction center is composed of one copy each of PsaA,B,C,D,E,F,I,J,K,L,M and X, and forms trimeric complexes.</text>
</comment>
<comment type="subcellular location">
    <subcellularLocation>
        <location evidence="2">Cellular thylakoid membrane</location>
        <topology evidence="2">Peripheral membrane protein</topology>
        <orientation evidence="2">Cytoplasmic side</orientation>
    </subcellularLocation>
</comment>